<gene>
    <name evidence="1" type="primary">rsxA</name>
    <name type="synonym">rnfA</name>
    <name type="ordered locus">SeAg_B1715</name>
</gene>
<comment type="function">
    <text evidence="1">Part of a membrane-bound complex that couples electron transfer with translocation of ions across the membrane. Required to maintain the reduced state of SoxR.</text>
</comment>
<comment type="subunit">
    <text evidence="1">The complex is composed of six subunits: RsxA, RsxB, RsxC, RsxD, RsxE and RsxG.</text>
</comment>
<comment type="subcellular location">
    <subcellularLocation>
        <location evidence="1">Cell inner membrane</location>
        <topology evidence="1">Multi-pass membrane protein</topology>
    </subcellularLocation>
</comment>
<comment type="similarity">
    <text evidence="1">Belongs to the NqrDE/RnfAE family.</text>
</comment>
<name>RSXA_SALA4</name>
<dbReference type="EC" id="7.-.-.-" evidence="1"/>
<dbReference type="EMBL" id="CP001138">
    <property type="protein sequence ID" value="ACH52058.1"/>
    <property type="molecule type" value="Genomic_DNA"/>
</dbReference>
<dbReference type="RefSeq" id="WP_000133179.1">
    <property type="nucleotide sequence ID" value="NC_011149.1"/>
</dbReference>
<dbReference type="SMR" id="B5F6I8"/>
<dbReference type="GeneID" id="66755900"/>
<dbReference type="KEGG" id="sea:SeAg_B1715"/>
<dbReference type="HOGENOM" id="CLU_095255_1_0_6"/>
<dbReference type="Proteomes" id="UP000008819">
    <property type="component" value="Chromosome"/>
</dbReference>
<dbReference type="GO" id="GO:0005886">
    <property type="term" value="C:plasma membrane"/>
    <property type="evidence" value="ECO:0007669"/>
    <property type="project" value="UniProtKB-SubCell"/>
</dbReference>
<dbReference type="GO" id="GO:0022900">
    <property type="term" value="P:electron transport chain"/>
    <property type="evidence" value="ECO:0007669"/>
    <property type="project" value="UniProtKB-UniRule"/>
</dbReference>
<dbReference type="HAMAP" id="MF_00459">
    <property type="entry name" value="RsxA_RnfA"/>
    <property type="match status" value="1"/>
</dbReference>
<dbReference type="InterPro" id="IPR011293">
    <property type="entry name" value="Ion_transpt_RnfA/RsxA"/>
</dbReference>
<dbReference type="InterPro" id="IPR003667">
    <property type="entry name" value="NqrDE/RnfAE"/>
</dbReference>
<dbReference type="InterPro" id="IPR050133">
    <property type="entry name" value="NqrDE/RnfAE_oxidrdctase"/>
</dbReference>
<dbReference type="NCBIfam" id="NF003481">
    <property type="entry name" value="PRK05151.1"/>
    <property type="match status" value="1"/>
</dbReference>
<dbReference type="NCBIfam" id="TIGR01943">
    <property type="entry name" value="rnfA"/>
    <property type="match status" value="1"/>
</dbReference>
<dbReference type="PANTHER" id="PTHR30335">
    <property type="entry name" value="INTEGRAL MEMBRANE PROTEIN OF SOXR-REDUCING COMPLEX"/>
    <property type="match status" value="1"/>
</dbReference>
<dbReference type="PANTHER" id="PTHR30335:SF0">
    <property type="entry name" value="ION-TRANSLOCATING OXIDOREDUCTASE COMPLEX SUBUNIT A"/>
    <property type="match status" value="1"/>
</dbReference>
<dbReference type="Pfam" id="PF02508">
    <property type="entry name" value="Rnf-Nqr"/>
    <property type="match status" value="1"/>
</dbReference>
<dbReference type="PIRSF" id="PIRSF006102">
    <property type="entry name" value="NQR_DE"/>
    <property type="match status" value="1"/>
</dbReference>
<protein>
    <recommendedName>
        <fullName evidence="1">Ion-translocating oxidoreductase complex subunit A</fullName>
        <ecNumber evidence="1">7.-.-.-</ecNumber>
    </recommendedName>
    <alternativeName>
        <fullName evidence="1">Rsx electron transport complex subunit A</fullName>
    </alternativeName>
</protein>
<feature type="chain" id="PRO_1000191731" description="Ion-translocating oxidoreductase complex subunit A">
    <location>
        <begin position="1"/>
        <end position="193"/>
    </location>
</feature>
<feature type="transmembrane region" description="Helical" evidence="1">
    <location>
        <begin position="5"/>
        <end position="25"/>
    </location>
</feature>
<feature type="transmembrane region" description="Helical" evidence="1">
    <location>
        <begin position="47"/>
        <end position="67"/>
    </location>
</feature>
<feature type="transmembrane region" description="Helical" evidence="1">
    <location>
        <begin position="72"/>
        <end position="92"/>
    </location>
</feature>
<feature type="transmembrane region" description="Helical" evidence="1">
    <location>
        <begin position="102"/>
        <end position="122"/>
    </location>
</feature>
<feature type="transmembrane region" description="Helical" evidence="1">
    <location>
        <begin position="134"/>
        <end position="154"/>
    </location>
</feature>
<feature type="transmembrane region" description="Helical" evidence="1">
    <location>
        <begin position="171"/>
        <end position="191"/>
    </location>
</feature>
<accession>B5F6I8</accession>
<proteinExistence type="inferred from homology"/>
<evidence type="ECO:0000255" key="1">
    <source>
        <dbReference type="HAMAP-Rule" id="MF_00459"/>
    </source>
</evidence>
<keyword id="KW-0997">Cell inner membrane</keyword>
<keyword id="KW-1003">Cell membrane</keyword>
<keyword id="KW-0249">Electron transport</keyword>
<keyword id="KW-0472">Membrane</keyword>
<keyword id="KW-1278">Translocase</keyword>
<keyword id="KW-0812">Transmembrane</keyword>
<keyword id="KW-1133">Transmembrane helix</keyword>
<keyword id="KW-0813">Transport</keyword>
<sequence>MTDYLLLFVGTVLVNNFVLVKFLGLCPFMGVSKKLETAMGMGLATTFVMTLASICAWLIDTWILIPLDLIYLRTLAFILVIAVVVQFTEMVVRKTSPALYRLLGIFLPLITTNCAVLGVALLNINLGHHFLQSALYGFSAAVGFSLVMVLFAAIRERLAVADVPAPFRGNAIALITAGLMSLAFMGFSGLVKL</sequence>
<organism>
    <name type="scientific">Salmonella agona (strain SL483)</name>
    <dbReference type="NCBI Taxonomy" id="454166"/>
    <lineage>
        <taxon>Bacteria</taxon>
        <taxon>Pseudomonadati</taxon>
        <taxon>Pseudomonadota</taxon>
        <taxon>Gammaproteobacteria</taxon>
        <taxon>Enterobacterales</taxon>
        <taxon>Enterobacteriaceae</taxon>
        <taxon>Salmonella</taxon>
    </lineage>
</organism>
<reference key="1">
    <citation type="journal article" date="2011" name="J. Bacteriol.">
        <title>Comparative genomics of 28 Salmonella enterica isolates: evidence for CRISPR-mediated adaptive sublineage evolution.</title>
        <authorList>
            <person name="Fricke W.F."/>
            <person name="Mammel M.K."/>
            <person name="McDermott P.F."/>
            <person name="Tartera C."/>
            <person name="White D.G."/>
            <person name="Leclerc J.E."/>
            <person name="Ravel J."/>
            <person name="Cebula T.A."/>
        </authorList>
    </citation>
    <scope>NUCLEOTIDE SEQUENCE [LARGE SCALE GENOMIC DNA]</scope>
    <source>
        <strain>SL483</strain>
    </source>
</reference>